<dbReference type="EMBL" id="X17681">
    <property type="protein sequence ID" value="CAA35666.1"/>
    <property type="molecule type" value="Genomic_DNA"/>
</dbReference>
<dbReference type="EMBL" id="X05454">
    <property type="protein sequence ID" value="CAA29023.1"/>
    <property type="molecule type" value="mRNA"/>
</dbReference>
<dbReference type="EMBL" id="X12487">
    <property type="protein sequence ID" value="CAA31010.1"/>
    <property type="molecule type" value="mRNA"/>
</dbReference>
<dbReference type="PIR" id="S07580">
    <property type="entry name" value="C24620"/>
</dbReference>
<dbReference type="RefSeq" id="NP_001412683.1">
    <property type="nucleotide sequence ID" value="NM_001425754.1"/>
</dbReference>
<dbReference type="RefSeq" id="XP_016437223.1">
    <property type="nucleotide sequence ID" value="XM_016581737.1"/>
</dbReference>
<dbReference type="SMR" id="P09042"/>
<dbReference type="STRING" id="4097.P09042"/>
<dbReference type="PaxDb" id="4097-P09042"/>
<dbReference type="GeneID" id="107763263"/>
<dbReference type="KEGG" id="nta:107763263"/>
<dbReference type="OMA" id="WSTRNHT"/>
<dbReference type="OrthoDB" id="1606473at2759"/>
<dbReference type="Proteomes" id="UP000084051">
    <property type="component" value="Unplaced"/>
</dbReference>
<dbReference type="GO" id="GO:0005615">
    <property type="term" value="C:extracellular space"/>
    <property type="evidence" value="ECO:0000318"/>
    <property type="project" value="GO_Central"/>
</dbReference>
<dbReference type="GO" id="GO:0005773">
    <property type="term" value="C:vacuole"/>
    <property type="evidence" value="ECO:0007669"/>
    <property type="project" value="UniProtKB-SubCell"/>
</dbReference>
<dbReference type="GO" id="GO:0006952">
    <property type="term" value="P:defense response"/>
    <property type="evidence" value="ECO:0007669"/>
    <property type="project" value="UniProtKB-KW"/>
</dbReference>
<dbReference type="GO" id="GO:0019953">
    <property type="term" value="P:sexual reproduction"/>
    <property type="evidence" value="ECO:0000318"/>
    <property type="project" value="GO_Central"/>
</dbReference>
<dbReference type="CDD" id="cd05381">
    <property type="entry name" value="CAP_PR-1"/>
    <property type="match status" value="1"/>
</dbReference>
<dbReference type="FunFam" id="3.40.33.10:FF:000006">
    <property type="entry name" value="Putative pathogenesis-related protein 1"/>
    <property type="match status" value="1"/>
</dbReference>
<dbReference type="Gene3D" id="3.40.33.10">
    <property type="entry name" value="CAP"/>
    <property type="match status" value="1"/>
</dbReference>
<dbReference type="InterPro" id="IPR018244">
    <property type="entry name" value="Allrgn_V5/Tpx1_CS"/>
</dbReference>
<dbReference type="InterPro" id="IPR014044">
    <property type="entry name" value="CAP_dom"/>
</dbReference>
<dbReference type="InterPro" id="IPR035940">
    <property type="entry name" value="CAP_sf"/>
</dbReference>
<dbReference type="InterPro" id="IPR001283">
    <property type="entry name" value="CRISP-related"/>
</dbReference>
<dbReference type="InterPro" id="IPR002413">
    <property type="entry name" value="V5_allergen-like"/>
</dbReference>
<dbReference type="PANTHER" id="PTHR10334">
    <property type="entry name" value="CYSTEINE-RICH SECRETORY PROTEIN-RELATED"/>
    <property type="match status" value="1"/>
</dbReference>
<dbReference type="Pfam" id="PF00188">
    <property type="entry name" value="CAP"/>
    <property type="match status" value="1"/>
</dbReference>
<dbReference type="PRINTS" id="PR00838">
    <property type="entry name" value="V5ALLERGEN"/>
</dbReference>
<dbReference type="PRINTS" id="PR00837">
    <property type="entry name" value="V5TPXLIKE"/>
</dbReference>
<dbReference type="SMART" id="SM00198">
    <property type="entry name" value="SCP"/>
    <property type="match status" value="1"/>
</dbReference>
<dbReference type="SUPFAM" id="SSF55797">
    <property type="entry name" value="PR-1-like"/>
    <property type="match status" value="1"/>
</dbReference>
<dbReference type="PROSITE" id="PS01009">
    <property type="entry name" value="CRISP_1"/>
    <property type="match status" value="1"/>
</dbReference>
<dbReference type="PROSITE" id="PS01010">
    <property type="entry name" value="CRISP_2"/>
    <property type="match status" value="1"/>
</dbReference>
<sequence length="168" mass="18583">MEFVLFSQMSSFFLVSTLLLFLIISHSCHAQNSQQDYLDAHNTARADVGVEPLTWDDQVAAYAQNYASQLAADCNLVHSHGQYGENLAWGSGDFLTAAKAVEMWVNEKQYYAHDSNTCAQGQVCGHYTQVVWRNSVRVGCARVQCNNGGYIVSCNYDPPGNVIGKSPY</sequence>
<reference key="1">
    <citation type="journal article" date="1990" name="Nucleic Acids Res.">
        <title>The nucleotide sequence of pathogenesis-related (PR) 1c protein gene of tobacco.</title>
        <authorList>
            <person name="Ohshima M."/>
            <person name="Harada N."/>
            <person name="Matsuoka M."/>
            <person name="Ohashi Y."/>
        </authorList>
    </citation>
    <scope>NUCLEOTIDE SEQUENCE [GENOMIC DNA]</scope>
    <source>
        <strain>cv. Samsun NN</strain>
        <tissue>Leaf</tissue>
    </source>
</reference>
<reference key="2">
    <citation type="journal article" date="1988" name="Nucleic Acids Res.">
        <title>Isolation and nucleotide sequence of cDNA clones for the pathogenesis-related proteins PR1a, PR1b and PR1c of Nicotiana tabacum cv. Xanthi nc induced by TMV infection.</title>
        <authorList>
            <person name="Cutt J.R."/>
            <person name="Dixon D.D."/>
            <person name="Carr J.P."/>
            <person name="Klessig D.F."/>
        </authorList>
    </citation>
    <scope>NUCLEOTIDE SEQUENCE [MRNA] OF 6-168</scope>
    <source>
        <strain>cv. Xanthi</strain>
    </source>
</reference>
<reference key="3">
    <citation type="journal article" date="1987" name="Nucleic Acids Res.">
        <title>Isolation and characterization of cDNA clones encoding pathogenesis-related proteins from tobacco mosaic virus infected tobacco plants.</title>
        <authorList>
            <person name="Pfitzner U.M."/>
            <person name="Goodman H.M."/>
        </authorList>
    </citation>
    <scope>NUCLEOTIDE SEQUENCE [MRNA] OF 8-168</scope>
    <source>
        <strain>cv. Samsun NN</strain>
    </source>
</reference>
<reference key="4">
    <citation type="journal article" date="1991" name="EMBO J.">
        <title>Differential targeting of the tobacco PR-1 pathogenesis-related proteins to the extracellular space and vacuoles of crystal idioblasts.</title>
        <authorList>
            <person name="Dixon D.C."/>
            <person name="Cutt J.R."/>
            <person name="Klessig D.F."/>
        </authorList>
    </citation>
    <scope>SUBCELLULAR LOCATION</scope>
</reference>
<comment type="function">
    <text>Probably involved in the defense reaction of plants against pathogens.</text>
</comment>
<comment type="subcellular location">
    <subcellularLocation>
        <location evidence="2">Vacuole</location>
    </subcellularLocation>
    <text>Accumulates in within the vacuoles of specialized cells known as crystal idioblasts.</text>
</comment>
<comment type="induction">
    <text>Synthesized during pathogen infection or other stress-related responses.</text>
</comment>
<comment type="PTM">
    <text evidence="1">Three disulfide bonds are present.</text>
</comment>
<comment type="similarity">
    <text evidence="3">Belongs to the CRISP family.</text>
</comment>
<protein>
    <recommendedName>
        <fullName>Pathogenesis-related protein 1C</fullName>
        <shortName>PR-1C</shortName>
    </recommendedName>
</protein>
<proteinExistence type="evidence at transcript level"/>
<keyword id="KW-1015">Disulfide bond</keyword>
<keyword id="KW-0568">Pathogenesis-related protein</keyword>
<keyword id="KW-0611">Plant defense</keyword>
<keyword id="KW-1185">Reference proteome</keyword>
<keyword id="KW-0732">Signal</keyword>
<keyword id="KW-0926">Vacuole</keyword>
<feature type="signal peptide">
    <location>
        <begin position="1"/>
        <end position="30"/>
    </location>
</feature>
<feature type="chain" id="PRO_0000006302" description="Pathogenesis-related protein 1C">
    <location>
        <begin position="31"/>
        <end position="168"/>
    </location>
</feature>
<feature type="domain" description="SCP">
    <location>
        <begin position="38"/>
        <end position="156"/>
    </location>
</feature>
<evidence type="ECO:0000250" key="1"/>
<evidence type="ECO:0000269" key="2">
    <source>
    </source>
</evidence>
<evidence type="ECO:0000305" key="3"/>
<name>PR1C_TOBAC</name>
<accession>P09042</accession>
<organism>
    <name type="scientific">Nicotiana tabacum</name>
    <name type="common">Common tobacco</name>
    <dbReference type="NCBI Taxonomy" id="4097"/>
    <lineage>
        <taxon>Eukaryota</taxon>
        <taxon>Viridiplantae</taxon>
        <taxon>Streptophyta</taxon>
        <taxon>Embryophyta</taxon>
        <taxon>Tracheophyta</taxon>
        <taxon>Spermatophyta</taxon>
        <taxon>Magnoliopsida</taxon>
        <taxon>eudicotyledons</taxon>
        <taxon>Gunneridae</taxon>
        <taxon>Pentapetalae</taxon>
        <taxon>asterids</taxon>
        <taxon>lamiids</taxon>
        <taxon>Solanales</taxon>
        <taxon>Solanaceae</taxon>
        <taxon>Nicotianoideae</taxon>
        <taxon>Nicotianeae</taxon>
        <taxon>Nicotiana</taxon>
    </lineage>
</organism>